<evidence type="ECO:0000255" key="1">
    <source>
        <dbReference type="HAMAP-Rule" id="MF_01554"/>
    </source>
</evidence>
<name>GLMM_DEIRA</name>
<comment type="function">
    <text evidence="1">Catalyzes the conversion of glucosamine-6-phosphate to glucosamine-1-phosphate.</text>
</comment>
<comment type="catalytic activity">
    <reaction evidence="1">
        <text>alpha-D-glucosamine 1-phosphate = D-glucosamine 6-phosphate</text>
        <dbReference type="Rhea" id="RHEA:23424"/>
        <dbReference type="ChEBI" id="CHEBI:58516"/>
        <dbReference type="ChEBI" id="CHEBI:58725"/>
        <dbReference type="EC" id="5.4.2.10"/>
    </reaction>
</comment>
<comment type="cofactor">
    <cofactor evidence="1">
        <name>Mg(2+)</name>
        <dbReference type="ChEBI" id="CHEBI:18420"/>
    </cofactor>
    <text evidence="1">Binds 1 Mg(2+) ion per subunit.</text>
</comment>
<comment type="PTM">
    <text evidence="1">Activated by phosphorylation.</text>
</comment>
<comment type="similarity">
    <text evidence="1">Belongs to the phosphohexose mutase family.</text>
</comment>
<proteinExistence type="inferred from homology"/>
<feature type="chain" id="PRO_0000147883" description="Phosphoglucosamine mutase">
    <location>
        <begin position="1"/>
        <end position="444"/>
    </location>
</feature>
<feature type="active site" description="Phosphoserine intermediate" evidence="1">
    <location>
        <position position="103"/>
    </location>
</feature>
<feature type="binding site" description="via phosphate group" evidence="1">
    <location>
        <position position="103"/>
    </location>
    <ligand>
        <name>Mg(2+)</name>
        <dbReference type="ChEBI" id="CHEBI:18420"/>
    </ligand>
</feature>
<feature type="binding site" evidence="1">
    <location>
        <position position="241"/>
    </location>
    <ligand>
        <name>Mg(2+)</name>
        <dbReference type="ChEBI" id="CHEBI:18420"/>
    </ligand>
</feature>
<feature type="binding site" evidence="1">
    <location>
        <position position="243"/>
    </location>
    <ligand>
        <name>Mg(2+)</name>
        <dbReference type="ChEBI" id="CHEBI:18420"/>
    </ligand>
</feature>
<feature type="binding site" evidence="1">
    <location>
        <position position="245"/>
    </location>
    <ligand>
        <name>Mg(2+)</name>
        <dbReference type="ChEBI" id="CHEBI:18420"/>
    </ligand>
</feature>
<feature type="modified residue" description="Phosphoserine" evidence="1">
    <location>
        <position position="103"/>
    </location>
</feature>
<organism>
    <name type="scientific">Deinococcus radiodurans (strain ATCC 13939 / DSM 20539 / JCM 16871 / CCUG 27074 / LMG 4051 / NBRC 15346 / NCIMB 9279 / VKM B-1422 / R1)</name>
    <dbReference type="NCBI Taxonomy" id="243230"/>
    <lineage>
        <taxon>Bacteria</taxon>
        <taxon>Thermotogati</taxon>
        <taxon>Deinococcota</taxon>
        <taxon>Deinococci</taxon>
        <taxon>Deinococcales</taxon>
        <taxon>Deinococcaceae</taxon>
        <taxon>Deinococcus</taxon>
    </lineage>
</organism>
<accession>Q9RSQ3</accession>
<dbReference type="EC" id="5.4.2.10" evidence="1"/>
<dbReference type="EMBL" id="AE000513">
    <property type="protein sequence ID" value="AAF11621.1"/>
    <property type="molecule type" value="Genomic_DNA"/>
</dbReference>
<dbReference type="PIR" id="A75319">
    <property type="entry name" value="A75319"/>
</dbReference>
<dbReference type="RefSeq" id="NP_295794.1">
    <property type="nucleotide sequence ID" value="NC_001263.1"/>
</dbReference>
<dbReference type="RefSeq" id="WP_010888702.1">
    <property type="nucleotide sequence ID" value="NC_001263.1"/>
</dbReference>
<dbReference type="SMR" id="Q9RSQ3"/>
<dbReference type="FunCoup" id="Q9RSQ3">
    <property type="interactions" value="461"/>
</dbReference>
<dbReference type="STRING" id="243230.DR_2071"/>
<dbReference type="PaxDb" id="243230-DR_2071"/>
<dbReference type="EnsemblBacteria" id="AAF11621">
    <property type="protein sequence ID" value="AAF11621"/>
    <property type="gene ID" value="DR_2071"/>
</dbReference>
<dbReference type="GeneID" id="69518313"/>
<dbReference type="KEGG" id="dra:DR_2071"/>
<dbReference type="PATRIC" id="fig|243230.17.peg.2296"/>
<dbReference type="eggNOG" id="COG1109">
    <property type="taxonomic scope" value="Bacteria"/>
</dbReference>
<dbReference type="HOGENOM" id="CLU_016950_7_0_0"/>
<dbReference type="InParanoid" id="Q9RSQ3"/>
<dbReference type="OrthoDB" id="9806956at2"/>
<dbReference type="Proteomes" id="UP000002524">
    <property type="component" value="Chromosome 1"/>
</dbReference>
<dbReference type="GO" id="GO:0005829">
    <property type="term" value="C:cytosol"/>
    <property type="evidence" value="ECO:0000318"/>
    <property type="project" value="GO_Central"/>
</dbReference>
<dbReference type="GO" id="GO:0000287">
    <property type="term" value="F:magnesium ion binding"/>
    <property type="evidence" value="ECO:0007669"/>
    <property type="project" value="UniProtKB-UniRule"/>
</dbReference>
<dbReference type="GO" id="GO:0008966">
    <property type="term" value="F:phosphoglucosamine mutase activity"/>
    <property type="evidence" value="ECO:0000318"/>
    <property type="project" value="GO_Central"/>
</dbReference>
<dbReference type="GO" id="GO:0004615">
    <property type="term" value="F:phosphomannomutase activity"/>
    <property type="evidence" value="ECO:0000318"/>
    <property type="project" value="GO_Central"/>
</dbReference>
<dbReference type="GO" id="GO:0005975">
    <property type="term" value="P:carbohydrate metabolic process"/>
    <property type="evidence" value="ECO:0007669"/>
    <property type="project" value="InterPro"/>
</dbReference>
<dbReference type="GO" id="GO:0009252">
    <property type="term" value="P:peptidoglycan biosynthetic process"/>
    <property type="evidence" value="ECO:0000318"/>
    <property type="project" value="GO_Central"/>
</dbReference>
<dbReference type="GO" id="GO:0006048">
    <property type="term" value="P:UDP-N-acetylglucosamine biosynthetic process"/>
    <property type="evidence" value="ECO:0000318"/>
    <property type="project" value="GO_Central"/>
</dbReference>
<dbReference type="CDD" id="cd05802">
    <property type="entry name" value="GlmM"/>
    <property type="match status" value="1"/>
</dbReference>
<dbReference type="FunFam" id="3.30.310.50:FF:000001">
    <property type="entry name" value="Phosphoglucosamine mutase"/>
    <property type="match status" value="1"/>
</dbReference>
<dbReference type="FunFam" id="3.40.120.10:FF:000001">
    <property type="entry name" value="Phosphoglucosamine mutase"/>
    <property type="match status" value="1"/>
</dbReference>
<dbReference type="FunFam" id="3.40.120.10:FF:000003">
    <property type="entry name" value="Phosphoglucosamine mutase"/>
    <property type="match status" value="1"/>
</dbReference>
<dbReference type="Gene3D" id="3.40.120.10">
    <property type="entry name" value="Alpha-D-Glucose-1,6-Bisphosphate, subunit A, domain 3"/>
    <property type="match status" value="3"/>
</dbReference>
<dbReference type="Gene3D" id="3.30.310.50">
    <property type="entry name" value="Alpha-D-phosphohexomutase, C-terminal domain"/>
    <property type="match status" value="1"/>
</dbReference>
<dbReference type="HAMAP" id="MF_01554_B">
    <property type="entry name" value="GlmM_B"/>
    <property type="match status" value="1"/>
</dbReference>
<dbReference type="InterPro" id="IPR005844">
    <property type="entry name" value="A-D-PHexomutase_a/b/a-I"/>
</dbReference>
<dbReference type="InterPro" id="IPR016055">
    <property type="entry name" value="A-D-PHexomutase_a/b/a-I/II/III"/>
</dbReference>
<dbReference type="InterPro" id="IPR005845">
    <property type="entry name" value="A-D-PHexomutase_a/b/a-II"/>
</dbReference>
<dbReference type="InterPro" id="IPR005846">
    <property type="entry name" value="A-D-PHexomutase_a/b/a-III"/>
</dbReference>
<dbReference type="InterPro" id="IPR005843">
    <property type="entry name" value="A-D-PHexomutase_C"/>
</dbReference>
<dbReference type="InterPro" id="IPR036900">
    <property type="entry name" value="A-D-PHexomutase_C_sf"/>
</dbReference>
<dbReference type="InterPro" id="IPR016066">
    <property type="entry name" value="A-D-PHexomutase_CS"/>
</dbReference>
<dbReference type="InterPro" id="IPR005841">
    <property type="entry name" value="Alpha-D-phosphohexomutase_SF"/>
</dbReference>
<dbReference type="InterPro" id="IPR006352">
    <property type="entry name" value="GlmM_bact"/>
</dbReference>
<dbReference type="InterPro" id="IPR050060">
    <property type="entry name" value="Phosphoglucosamine_mutase"/>
</dbReference>
<dbReference type="NCBIfam" id="TIGR01455">
    <property type="entry name" value="glmM"/>
    <property type="match status" value="1"/>
</dbReference>
<dbReference type="NCBIfam" id="NF008139">
    <property type="entry name" value="PRK10887.1"/>
    <property type="match status" value="1"/>
</dbReference>
<dbReference type="PANTHER" id="PTHR42946:SF1">
    <property type="entry name" value="PHOSPHOGLUCOMUTASE (ALPHA-D-GLUCOSE-1,6-BISPHOSPHATE-DEPENDENT)"/>
    <property type="match status" value="1"/>
</dbReference>
<dbReference type="PANTHER" id="PTHR42946">
    <property type="entry name" value="PHOSPHOHEXOSE MUTASE"/>
    <property type="match status" value="1"/>
</dbReference>
<dbReference type="Pfam" id="PF02878">
    <property type="entry name" value="PGM_PMM_I"/>
    <property type="match status" value="1"/>
</dbReference>
<dbReference type="Pfam" id="PF02879">
    <property type="entry name" value="PGM_PMM_II"/>
    <property type="match status" value="1"/>
</dbReference>
<dbReference type="Pfam" id="PF02880">
    <property type="entry name" value="PGM_PMM_III"/>
    <property type="match status" value="1"/>
</dbReference>
<dbReference type="Pfam" id="PF00408">
    <property type="entry name" value="PGM_PMM_IV"/>
    <property type="match status" value="1"/>
</dbReference>
<dbReference type="PRINTS" id="PR00509">
    <property type="entry name" value="PGMPMM"/>
</dbReference>
<dbReference type="SUPFAM" id="SSF55957">
    <property type="entry name" value="Phosphoglucomutase, C-terminal domain"/>
    <property type="match status" value="1"/>
</dbReference>
<dbReference type="SUPFAM" id="SSF53738">
    <property type="entry name" value="Phosphoglucomutase, first 3 domains"/>
    <property type="match status" value="3"/>
</dbReference>
<dbReference type="PROSITE" id="PS00710">
    <property type="entry name" value="PGM_PMM"/>
    <property type="match status" value="1"/>
</dbReference>
<protein>
    <recommendedName>
        <fullName evidence="1">Phosphoglucosamine mutase</fullName>
        <ecNumber evidence="1">5.4.2.10</ecNumber>
    </recommendedName>
</protein>
<reference key="1">
    <citation type="journal article" date="1999" name="Science">
        <title>Genome sequence of the radioresistant bacterium Deinococcus radiodurans R1.</title>
        <authorList>
            <person name="White O."/>
            <person name="Eisen J.A."/>
            <person name="Heidelberg J.F."/>
            <person name="Hickey E.K."/>
            <person name="Peterson J.D."/>
            <person name="Dodson R.J."/>
            <person name="Haft D.H."/>
            <person name="Gwinn M.L."/>
            <person name="Nelson W.C."/>
            <person name="Richardson D.L."/>
            <person name="Moffat K.S."/>
            <person name="Qin H."/>
            <person name="Jiang L."/>
            <person name="Pamphile W."/>
            <person name="Crosby M."/>
            <person name="Shen M."/>
            <person name="Vamathevan J.J."/>
            <person name="Lam P."/>
            <person name="McDonald L.A."/>
            <person name="Utterback T.R."/>
            <person name="Zalewski C."/>
            <person name="Makarova K.S."/>
            <person name="Aravind L."/>
            <person name="Daly M.J."/>
            <person name="Minton K.W."/>
            <person name="Fleischmann R.D."/>
            <person name="Ketchum K.A."/>
            <person name="Nelson K.E."/>
            <person name="Salzberg S.L."/>
            <person name="Smith H.O."/>
            <person name="Venter J.C."/>
            <person name="Fraser C.M."/>
        </authorList>
    </citation>
    <scope>NUCLEOTIDE SEQUENCE [LARGE SCALE GENOMIC DNA]</scope>
    <source>
        <strain>ATCC 13939 / DSM 20539 / JCM 16871 / CCUG 27074 / LMG 4051 / NBRC 15346 / NCIMB 9279 / VKM B-1422 / R1</strain>
    </source>
</reference>
<sequence length="444" mass="46962">MTERKYFGTDGVRAVAGEFPLTPAWVMALGAAAGEVFKRRNPRASVVIGKDTRQSGDMLEAALAAGLTSRGVNVVHLGVLPTPGVSYLTRHLGAEAGVVISASHNPYEDNGIKFFGPGGGKLSDATELEIEAAIDEAATLAPVTGVNLGSVTNYTEAERLYTAFLSSHAPDLSGMRIALDCANGAAYRVAPKVFQQAGADVFAVYTTPDGRNINRGCGSTHMDHLRLIVREGDYDLGIAFDGDADRALFVDSRGNMIHGDHMLLLSARARGEKAVVATIMTNMALEVKLQEAGLTLERTAVGDRYVHERLHAKGLNLGGEQSGHVLFLDVSPTGDGVLTALLTLSSMKKLGTTLDALYDELVMFPQTLVNVRVKDKKAIASDPAVQHAVADAEKQLAGKGRINLRPSGTENLIRVMVEGQDEGEIHDIAAAVAKVVEERGAAGA</sequence>
<keyword id="KW-0413">Isomerase</keyword>
<keyword id="KW-0460">Magnesium</keyword>
<keyword id="KW-0479">Metal-binding</keyword>
<keyword id="KW-0597">Phosphoprotein</keyword>
<keyword id="KW-1185">Reference proteome</keyword>
<gene>
    <name evidence="1" type="primary">glmM</name>
    <name type="ordered locus">DR_2071</name>
</gene>